<organism>
    <name type="scientific">Homo sapiens</name>
    <name type="common">Human</name>
    <dbReference type="NCBI Taxonomy" id="9606"/>
    <lineage>
        <taxon>Eukaryota</taxon>
        <taxon>Metazoa</taxon>
        <taxon>Chordata</taxon>
        <taxon>Craniata</taxon>
        <taxon>Vertebrata</taxon>
        <taxon>Euteleostomi</taxon>
        <taxon>Mammalia</taxon>
        <taxon>Eutheria</taxon>
        <taxon>Euarchontoglires</taxon>
        <taxon>Primates</taxon>
        <taxon>Haplorrhini</taxon>
        <taxon>Catarrhini</taxon>
        <taxon>Hominidae</taxon>
        <taxon>Homo</taxon>
    </lineage>
</organism>
<dbReference type="EMBL" id="AF332558">
    <property type="protein sequence ID" value="AAK31316.1"/>
    <property type="molecule type" value="mRNA"/>
</dbReference>
<dbReference type="EMBL" id="AF354654">
    <property type="protein sequence ID" value="AAK39542.1"/>
    <property type="molecule type" value="mRNA"/>
</dbReference>
<dbReference type="EMBL" id="AF354655">
    <property type="protein sequence ID" value="AAK39543.1"/>
    <property type="molecule type" value="mRNA"/>
</dbReference>
<dbReference type="EMBL" id="U82987">
    <property type="protein sequence ID" value="AAB51243.2"/>
    <property type="molecule type" value="mRNA"/>
</dbReference>
<dbReference type="EMBL" id="CH471126">
    <property type="protein sequence ID" value="EAW57465.1"/>
    <property type="molecule type" value="Genomic_DNA"/>
</dbReference>
<dbReference type="EMBL" id="BC136481">
    <property type="protein sequence ID" value="AAI36482.1"/>
    <property type="molecule type" value="mRNA"/>
</dbReference>
<dbReference type="CCDS" id="CCDS12697.1">
    <molecule id="Q9BXH1-1"/>
</dbReference>
<dbReference type="CCDS" id="CCDS46130.1">
    <molecule id="Q9BXH1-2"/>
</dbReference>
<dbReference type="RefSeq" id="NP_001120712.1">
    <property type="nucleotide sequence ID" value="NM_001127240.2"/>
</dbReference>
<dbReference type="RefSeq" id="NP_001120713.1">
    <molecule id="Q9BXH1-2"/>
    <property type="nucleotide sequence ID" value="NM_001127241.3"/>
</dbReference>
<dbReference type="RefSeq" id="NP_001120714.1">
    <property type="nucleotide sequence ID" value="NM_001127242.2"/>
</dbReference>
<dbReference type="RefSeq" id="NP_055232.1">
    <molecule id="Q9BXH1-1"/>
    <property type="nucleotide sequence ID" value="NM_014417.5"/>
</dbReference>
<dbReference type="RefSeq" id="XP_006723204.1">
    <molecule id="Q9BXH1-1"/>
    <property type="nucleotide sequence ID" value="XM_006723141.4"/>
</dbReference>
<dbReference type="RefSeq" id="XP_047294562.1">
    <molecule id="Q9BXH1-1"/>
    <property type="nucleotide sequence ID" value="XM_047438606.1"/>
</dbReference>
<dbReference type="RefSeq" id="XP_054176516.1">
    <molecule id="Q9BXH1-1"/>
    <property type="nucleotide sequence ID" value="XM_054320541.1"/>
</dbReference>
<dbReference type="RefSeq" id="XP_054176518.1">
    <molecule id="Q9BXH1-1"/>
    <property type="nucleotide sequence ID" value="XM_054320543.1"/>
</dbReference>
<dbReference type="PDB" id="2M04">
    <property type="method" value="NMR"/>
    <property type="chains" value="B=130-154"/>
</dbReference>
<dbReference type="PDB" id="4BPI">
    <property type="method" value="X-ray"/>
    <property type="resolution" value="1.98 A"/>
    <property type="chains" value="B=136-152"/>
</dbReference>
<dbReference type="PDB" id="4BPJ">
    <property type="method" value="X-ray"/>
    <property type="resolution" value="1.60 A"/>
    <property type="chains" value="D=139-153"/>
</dbReference>
<dbReference type="PDB" id="4BPK">
    <property type="method" value="X-ray"/>
    <property type="resolution" value="1.76 A"/>
    <property type="chains" value="C/D=134-152"/>
</dbReference>
<dbReference type="PDB" id="4HNJ">
    <property type="method" value="X-ray"/>
    <property type="resolution" value="2.90 A"/>
    <property type="chains" value="C=130-154"/>
</dbReference>
<dbReference type="PDB" id="5UUL">
    <property type="method" value="X-ray"/>
    <property type="resolution" value="1.33 A"/>
    <property type="chains" value="B=132-154"/>
</dbReference>
<dbReference type="PDB" id="6QFM">
    <property type="method" value="X-ray"/>
    <property type="resolution" value="2.00 A"/>
    <property type="chains" value="B=127-149"/>
</dbReference>
<dbReference type="PDB" id="6QG8">
    <property type="method" value="X-ray"/>
    <property type="resolution" value="1.90 A"/>
    <property type="chains" value="B=127-149"/>
</dbReference>
<dbReference type="PDB" id="6TQP">
    <property type="method" value="X-ray"/>
    <property type="resolution" value="1.85 A"/>
    <property type="chains" value="B=130-155"/>
</dbReference>
<dbReference type="PDB" id="7DVD">
    <property type="method" value="X-ray"/>
    <property type="resolution" value="2.59 A"/>
    <property type="chains" value="E=136-150"/>
</dbReference>
<dbReference type="PDB" id="7P0S">
    <property type="method" value="X-ray"/>
    <property type="resolution" value="2.50 A"/>
    <property type="chains" value="C/U=130-155"/>
</dbReference>
<dbReference type="PDB" id="7P9W">
    <property type="method" value="X-ray"/>
    <property type="resolution" value="2.00 A"/>
    <property type="chains" value="B=130-155"/>
</dbReference>
<dbReference type="PDB" id="7QTX">
    <property type="method" value="X-ray"/>
    <property type="resolution" value="2.12 A"/>
    <property type="chains" value="B=130-155"/>
</dbReference>
<dbReference type="PDBsum" id="2M04"/>
<dbReference type="PDBsum" id="4BPI"/>
<dbReference type="PDBsum" id="4BPJ"/>
<dbReference type="PDBsum" id="4BPK"/>
<dbReference type="PDBsum" id="4HNJ"/>
<dbReference type="PDBsum" id="5UUL"/>
<dbReference type="PDBsum" id="6QFM"/>
<dbReference type="PDBsum" id="6QG8"/>
<dbReference type="PDBsum" id="6TQP"/>
<dbReference type="PDBsum" id="7DVD"/>
<dbReference type="PDBsum" id="7P0S"/>
<dbReference type="PDBsum" id="7P9W"/>
<dbReference type="PDBsum" id="7QTX"/>
<dbReference type="SMR" id="Q9BXH1"/>
<dbReference type="BioGRID" id="118009">
    <property type="interactions" value="36"/>
</dbReference>
<dbReference type="ComplexPortal" id="CPX-1986">
    <property type="entry name" value="PUMA:BCL-2 complex"/>
</dbReference>
<dbReference type="ComplexPortal" id="CPX-1987">
    <property type="entry name" value="PUMA:BCL-XL complex"/>
</dbReference>
<dbReference type="DIP" id="DIP-29215N"/>
<dbReference type="IntAct" id="Q9BXH1">
    <property type="interactions" value="10"/>
</dbReference>
<dbReference type="MINT" id="Q9BXH1"/>
<dbReference type="iPTMnet" id="Q9BXH1"/>
<dbReference type="PhosphoSitePlus" id="Q9BXH1"/>
<dbReference type="BioMuta" id="BBC3"/>
<dbReference type="DMDM" id="56748610"/>
<dbReference type="jPOST" id="Q9BXH1"/>
<dbReference type="MassIVE" id="Q9BXH1"/>
<dbReference type="ProteomicsDB" id="79423">
    <molecule id="Q9BXH1-1"/>
</dbReference>
<dbReference type="ProteomicsDB" id="79424">
    <molecule id="Q9BXH1-2"/>
</dbReference>
<dbReference type="Pumba" id="Q9BXH1"/>
<dbReference type="Antibodypedia" id="3572">
    <property type="antibodies" value="790 antibodies from 44 providers"/>
</dbReference>
<dbReference type="DNASU" id="27113"/>
<dbReference type="Ensembl" id="ENST00000341983.8">
    <molecule id="Q9BXH1-2"/>
    <property type="protein sequence ID" value="ENSP00000341155.4"/>
    <property type="gene ID" value="ENSG00000105327.18"/>
</dbReference>
<dbReference type="Ensembl" id="ENST00000439096.3">
    <molecule id="Q9BXH1-1"/>
    <property type="protein sequence ID" value="ENSP00000395862.2"/>
    <property type="gene ID" value="ENSG00000105327.18"/>
</dbReference>
<dbReference type="GeneID" id="27113"/>
<dbReference type="KEGG" id="hsa:27113"/>
<dbReference type="MANE-Select" id="ENST00000439096.3">
    <property type="protein sequence ID" value="ENSP00000395862.2"/>
    <property type="RefSeq nucleotide sequence ID" value="NM_014417.5"/>
    <property type="RefSeq protein sequence ID" value="NP_055232.1"/>
</dbReference>
<dbReference type="UCSC" id="uc002pgf.5">
    <molecule id="Q9BXH1-1"/>
    <property type="organism name" value="human"/>
</dbReference>
<dbReference type="AGR" id="HGNC:17868"/>
<dbReference type="CTD" id="27113"/>
<dbReference type="DisGeNET" id="27113"/>
<dbReference type="GeneCards" id="BBC3"/>
<dbReference type="HGNC" id="HGNC:17868">
    <property type="gene designation" value="BBC3"/>
</dbReference>
<dbReference type="HPA" id="ENSG00000105327">
    <property type="expression patterns" value="Low tissue specificity"/>
</dbReference>
<dbReference type="MalaCards" id="BBC3"/>
<dbReference type="MIM" id="605854">
    <property type="type" value="gene"/>
</dbReference>
<dbReference type="neXtProt" id="NX_Q9BXH1"/>
<dbReference type="OpenTargets" id="ENSG00000105327"/>
<dbReference type="PharmGKB" id="PA38471"/>
<dbReference type="VEuPathDB" id="HostDB:ENSG00000105327"/>
<dbReference type="GeneTree" id="ENSGT00390000002767"/>
<dbReference type="HOGENOM" id="CLU_158732_0_0_1"/>
<dbReference type="OrthoDB" id="9540104at2759"/>
<dbReference type="PhylomeDB" id="Q9BXH1"/>
<dbReference type="PathwayCommons" id="Q9BXH1"/>
<dbReference type="Reactome" id="R-HSA-111453">
    <property type="pathway name" value="BH3-only proteins associate with and inactivate anti-apoptotic BCL-2 members"/>
</dbReference>
<dbReference type="Reactome" id="R-HSA-139915">
    <property type="pathway name" value="Activation of PUMA and translocation to mitochondria"/>
</dbReference>
<dbReference type="Reactome" id="R-HSA-6803204">
    <property type="pathway name" value="TP53 Regulates Transcription of Genes Involved in Cytochrome C Release"/>
</dbReference>
<dbReference type="Reactome" id="R-HSA-9614657">
    <property type="pathway name" value="FOXO-mediated transcription of cell death genes"/>
</dbReference>
<dbReference type="SignaLink" id="Q9BXH1"/>
<dbReference type="SIGNOR" id="Q9BXH1"/>
<dbReference type="BioGRID-ORCS" id="27113">
    <property type="hits" value="22 hits in 1161 CRISPR screens"/>
</dbReference>
<dbReference type="CD-CODE" id="8C2F96ED">
    <property type="entry name" value="Centrosome"/>
</dbReference>
<dbReference type="ChiTaRS" id="BBC3">
    <property type="organism name" value="human"/>
</dbReference>
<dbReference type="EvolutionaryTrace" id="Q9BXH1"/>
<dbReference type="GenomeRNAi" id="27113"/>
<dbReference type="Pharos" id="Q9BXH1">
    <property type="development level" value="Tbio"/>
</dbReference>
<dbReference type="Proteomes" id="UP000005640">
    <property type="component" value="Chromosome 19"/>
</dbReference>
<dbReference type="Bgee" id="ENSG00000105327">
    <property type="expression patterns" value="Expressed in type B pancreatic cell and 182 other cell types or tissues"/>
</dbReference>
<dbReference type="ExpressionAtlas" id="Q9BXH1">
    <property type="expression patterns" value="baseline and differential"/>
</dbReference>
<dbReference type="GO" id="GO:0005829">
    <property type="term" value="C:cytosol"/>
    <property type="evidence" value="ECO:0000304"/>
    <property type="project" value="Reactome"/>
</dbReference>
<dbReference type="GO" id="GO:0005741">
    <property type="term" value="C:mitochondrial outer membrane"/>
    <property type="evidence" value="ECO:0000304"/>
    <property type="project" value="Reactome"/>
</dbReference>
<dbReference type="GO" id="GO:0005739">
    <property type="term" value="C:mitochondrion"/>
    <property type="evidence" value="ECO:0000314"/>
    <property type="project" value="UniProtKB"/>
</dbReference>
<dbReference type="GO" id="GO:0097190">
    <property type="term" value="P:apoptotic signaling pathway"/>
    <property type="evidence" value="ECO:0000314"/>
    <property type="project" value="UniProtKB"/>
</dbReference>
<dbReference type="GO" id="GO:0071456">
    <property type="term" value="P:cellular response to hypoxia"/>
    <property type="evidence" value="ECO:0000270"/>
    <property type="project" value="UniProtKB"/>
</dbReference>
<dbReference type="GO" id="GO:0071479">
    <property type="term" value="P:cellular response to ionizing radiation"/>
    <property type="evidence" value="ECO:0007669"/>
    <property type="project" value="Ensembl"/>
</dbReference>
<dbReference type="GO" id="GO:0008340">
    <property type="term" value="P:determination of adult lifespan"/>
    <property type="evidence" value="ECO:0000250"/>
    <property type="project" value="BHF-UCL"/>
</dbReference>
<dbReference type="GO" id="GO:0006974">
    <property type="term" value="P:DNA damage response"/>
    <property type="evidence" value="ECO:0000250"/>
    <property type="project" value="BHF-UCL"/>
</dbReference>
<dbReference type="GO" id="GO:0097194">
    <property type="term" value="P:execution phase of apoptosis"/>
    <property type="evidence" value="ECO:0000314"/>
    <property type="project" value="UniProtKB"/>
</dbReference>
<dbReference type="GO" id="GO:0044346">
    <property type="term" value="P:fibroblast apoptotic process"/>
    <property type="evidence" value="ECO:0007669"/>
    <property type="project" value="Ensembl"/>
</dbReference>
<dbReference type="GO" id="GO:0097193">
    <property type="term" value="P:intrinsic apoptotic signaling pathway"/>
    <property type="evidence" value="ECO:0000314"/>
    <property type="project" value="UniProtKB"/>
</dbReference>
<dbReference type="GO" id="GO:0042771">
    <property type="term" value="P:intrinsic apoptotic signaling pathway in response to DNA damage by p53 class mediator"/>
    <property type="evidence" value="ECO:0007669"/>
    <property type="project" value="Ensembl"/>
</dbReference>
<dbReference type="GO" id="GO:0070059">
    <property type="term" value="P:intrinsic apoptotic signaling pathway in response to endoplasmic reticulum stress"/>
    <property type="evidence" value="ECO:0000314"/>
    <property type="project" value="ParkinsonsUK-UCL"/>
</dbReference>
<dbReference type="GO" id="GO:1902237">
    <property type="term" value="P:positive regulation of endoplasmic reticulum stress-induced intrinsic apoptotic signaling pathway"/>
    <property type="evidence" value="ECO:0000304"/>
    <property type="project" value="ParkinsonsUK-UCL"/>
</dbReference>
<dbReference type="GO" id="GO:1903749">
    <property type="term" value="P:positive regulation of establishment of protein localization to mitochondrion"/>
    <property type="evidence" value="ECO:0007669"/>
    <property type="project" value="Ensembl"/>
</dbReference>
<dbReference type="GO" id="GO:2000271">
    <property type="term" value="P:positive regulation of fibroblast apoptotic process"/>
    <property type="evidence" value="ECO:0007669"/>
    <property type="project" value="Ensembl"/>
</dbReference>
<dbReference type="GO" id="GO:2001244">
    <property type="term" value="P:positive regulation of intrinsic apoptotic signaling pathway"/>
    <property type="evidence" value="ECO:0000315"/>
    <property type="project" value="UniProtKB"/>
</dbReference>
<dbReference type="GO" id="GO:1903896">
    <property type="term" value="P:positive regulation of IRE1-mediated unfolded protein response"/>
    <property type="evidence" value="ECO:0000304"/>
    <property type="project" value="ParkinsonsUK-UCL"/>
</dbReference>
<dbReference type="GO" id="GO:0043525">
    <property type="term" value="P:positive regulation of neuron apoptotic process"/>
    <property type="evidence" value="ECO:0000250"/>
    <property type="project" value="UniProtKB"/>
</dbReference>
<dbReference type="GO" id="GO:0031334">
    <property type="term" value="P:positive regulation of protein-containing complex assembly"/>
    <property type="evidence" value="ECO:0000314"/>
    <property type="project" value="BHF-UCL"/>
</dbReference>
<dbReference type="GO" id="GO:0090200">
    <property type="term" value="P:positive regulation of release of cytochrome c from mitochondria"/>
    <property type="evidence" value="ECO:0000316"/>
    <property type="project" value="BHF-UCL"/>
</dbReference>
<dbReference type="GO" id="GO:0070245">
    <property type="term" value="P:positive regulation of thymocyte apoptotic process"/>
    <property type="evidence" value="ECO:0000250"/>
    <property type="project" value="BHF-UCL"/>
</dbReference>
<dbReference type="GO" id="GO:0001836">
    <property type="term" value="P:release of cytochrome c from mitochondria"/>
    <property type="evidence" value="ECO:0000314"/>
    <property type="project" value="UniProtKB"/>
</dbReference>
<dbReference type="GO" id="GO:0034976">
    <property type="term" value="P:response to endoplasmic reticulum stress"/>
    <property type="evidence" value="ECO:0000314"/>
    <property type="project" value="UniProtKB"/>
</dbReference>
<dbReference type="GO" id="GO:0070231">
    <property type="term" value="P:T cell apoptotic process"/>
    <property type="evidence" value="ECO:0007669"/>
    <property type="project" value="Ensembl"/>
</dbReference>
<dbReference type="InterPro" id="IPR031661">
    <property type="entry name" value="Bbc3"/>
</dbReference>
<dbReference type="PANTHER" id="PTHR28639">
    <property type="entry name" value="BCL-2-BINDING COMPONENT 3"/>
    <property type="match status" value="1"/>
</dbReference>
<dbReference type="PANTHER" id="PTHR28639:SF1">
    <property type="entry name" value="BCL-2-BINDING COMPONENT 3, ISOFORMS 3_4"/>
    <property type="match status" value="1"/>
</dbReference>
<dbReference type="Pfam" id="PF15826">
    <property type="entry name" value="PUMA"/>
    <property type="match status" value="1"/>
</dbReference>
<reference key="1">
    <citation type="journal article" date="2001" name="Mol. Cell">
        <title>PUMA induces the rapid apoptosis of colorectal cancer cells.</title>
        <authorList>
            <person name="Yu J."/>
            <person name="Zhang L."/>
            <person name="Hwang P.M."/>
            <person name="Kinzler K.W."/>
            <person name="Vogelstein B."/>
        </authorList>
    </citation>
    <scope>NUCLEOTIDE SEQUENCE [MRNA] (ISOFORM 1)</scope>
    <scope>FUNCTION</scope>
    <scope>SUBCELLULAR LOCATION</scope>
    <scope>INTERACTION WITH BCL2 AND BCL2L1</scope>
    <scope>TISSUE SPECIFICITY</scope>
</reference>
<reference key="2">
    <citation type="journal article" date="2001" name="Mol. Cell">
        <title>PUMA, a novel proapoptotic gene, is induced by p53.</title>
        <authorList>
            <person name="Nakano K."/>
            <person name="Wousden K.H."/>
        </authorList>
    </citation>
    <scope>NUCLEOTIDE SEQUENCE [MRNA] (ISOFORMS 2; 3 AND 4)</scope>
    <scope>FUNCTION</scope>
    <scope>INTERACTION WITH BCL2</scope>
    <scope>INDUCTION BY TP53</scope>
    <scope>SUBCELLULAR LOCATION</scope>
    <scope>MUTAGENESIS OF 141-LEU--ARG-143</scope>
</reference>
<reference key="3">
    <citation type="journal article" date="2001" name="Proc. Natl. Acad. Sci. U.S.A.">
        <title>Expression of bbc3, a pro-apoptotic BH3-only gene, is regulated by diverse cell death and survival signals.</title>
        <authorList>
            <person name="Han J.-W."/>
            <person name="Flemington C."/>
            <person name="Houghton A.B."/>
            <person name="Gu Z."/>
            <person name="Zambetti G.P."/>
            <person name="Lutz R.J."/>
            <person name="Zhu L."/>
            <person name="Chittenden T."/>
        </authorList>
    </citation>
    <scope>NUCLEOTIDE SEQUENCE [MRNA] (ISOFORM 1)</scope>
    <scope>INDUCTION</scope>
    <scope>SUBCELLULAR LOCATION</scope>
</reference>
<reference key="4">
    <citation type="submission" date="2005-07" db="EMBL/GenBank/DDBJ databases">
        <authorList>
            <person name="Mural R.J."/>
            <person name="Istrail S."/>
            <person name="Sutton G.G."/>
            <person name="Florea L."/>
            <person name="Halpern A.L."/>
            <person name="Mobarry C.M."/>
            <person name="Lippert R."/>
            <person name="Walenz B."/>
            <person name="Shatkay H."/>
            <person name="Dew I."/>
            <person name="Miller J.R."/>
            <person name="Flanigan M.J."/>
            <person name="Edwards N.J."/>
            <person name="Bolanos R."/>
            <person name="Fasulo D."/>
            <person name="Halldorsson B.V."/>
            <person name="Hannenhalli S."/>
            <person name="Turner R."/>
            <person name="Yooseph S."/>
            <person name="Lu F."/>
            <person name="Nusskern D.R."/>
            <person name="Shue B.C."/>
            <person name="Zheng X.H."/>
            <person name="Zhong F."/>
            <person name="Delcher A.L."/>
            <person name="Huson D.H."/>
            <person name="Kravitz S.A."/>
            <person name="Mouchard L."/>
            <person name="Reinert K."/>
            <person name="Remington K.A."/>
            <person name="Clark A.G."/>
            <person name="Waterman M.S."/>
            <person name="Eichler E.E."/>
            <person name="Adams M.D."/>
            <person name="Hunkapiller M.W."/>
            <person name="Myers E.W."/>
            <person name="Venter J.C."/>
        </authorList>
    </citation>
    <scope>NUCLEOTIDE SEQUENCE [LARGE SCALE GENOMIC DNA]</scope>
</reference>
<reference key="5">
    <citation type="journal article" date="2004" name="Genome Res.">
        <title>The status, quality, and expansion of the NIH full-length cDNA project: the Mammalian Gene Collection (MGC).</title>
        <authorList>
            <consortium name="The MGC Project Team"/>
        </authorList>
    </citation>
    <scope>NUCLEOTIDE SEQUENCE [LARGE SCALE MRNA] (ISOFORM 1)</scope>
    <source>
        <tissue>Testis</tissue>
    </source>
</reference>
<reference key="6">
    <citation type="journal article" date="2011" name="BMC Syst. Biol.">
        <title>Initial characterization of the human central proteome.</title>
        <authorList>
            <person name="Burkard T.R."/>
            <person name="Planyavsky M."/>
            <person name="Kaupe I."/>
            <person name="Breitwieser F.P."/>
            <person name="Buerckstuemmer T."/>
            <person name="Bennett K.L."/>
            <person name="Superti-Furga G."/>
            <person name="Colinge J."/>
        </authorList>
    </citation>
    <scope>IDENTIFICATION BY MASS SPECTROMETRY [LARGE SCALE ANALYSIS]</scope>
</reference>
<reference key="7">
    <citation type="journal article" date="2012" name="PLoS ONE">
        <title>CHOP potentially co-operates with FOXO3a in neuronal cells to regulate PUMA and BIM expression in response to ER stress.</title>
        <authorList>
            <person name="Ghosh A.P."/>
            <person name="Klocke B.J."/>
            <person name="Ballestas M.E."/>
            <person name="Roth K.A."/>
        </authorList>
    </citation>
    <scope>INDUCTION</scope>
</reference>
<reference key="8">
    <citation type="journal article" date="2013" name="J. Proteome Res.">
        <title>Toward a comprehensive characterization of a human cancer cell phosphoproteome.</title>
        <authorList>
            <person name="Zhou H."/>
            <person name="Di Palma S."/>
            <person name="Preisinger C."/>
            <person name="Peng M."/>
            <person name="Polat A.N."/>
            <person name="Heck A.J."/>
            <person name="Mohammed S."/>
        </authorList>
    </citation>
    <scope>PHOSPHORYLATION [LARGE SCALE ANALYSIS] AT SER-10</scope>
    <scope>IDENTIFICATION BY MASS SPECTROMETRY [LARGE SCALE ANALYSIS]</scope>
    <source>
        <tissue>Erythroleukemia</tissue>
    </source>
</reference>
<reference key="9">
    <citation type="journal article" date="2015" name="Proteomics">
        <title>N-terminome analysis of the human mitochondrial proteome.</title>
        <authorList>
            <person name="Vaca Jacome A.S."/>
            <person name="Rabilloud T."/>
            <person name="Schaeffer-Reiss C."/>
            <person name="Rompais M."/>
            <person name="Ayoub D."/>
            <person name="Lane L."/>
            <person name="Bairoch A."/>
            <person name="Van Dorsselaer A."/>
            <person name="Carapito C."/>
        </authorList>
    </citation>
    <scope>IDENTIFICATION BY MASS SPECTROMETRY [LARGE SCALE ANALYSIS]</scope>
</reference>
<reference key="10">
    <citation type="journal article" date="2013" name="Nat. Chem. Biol.">
        <title>PUMA binding induces partial unfolding within BCL-xL to disrupt p53 binding and promote apoptosis.</title>
        <authorList>
            <person name="Follis A.V."/>
            <person name="Chipuk J.E."/>
            <person name="Fisher J.C."/>
            <person name="Yun M.K."/>
            <person name="Grace C.R."/>
            <person name="Nourse A."/>
            <person name="Baran K."/>
            <person name="Ou L."/>
            <person name="Min L."/>
            <person name="White S.W."/>
            <person name="Green D.R."/>
            <person name="Kriwacki R.W."/>
        </authorList>
    </citation>
    <scope>X-RAY CRYSTALLOGRAPHY (2.9 ANGSTROMS) OF 130-154 IN COMPLEX WITH BCL2L1</scope>
    <scope>STRUCTURE BY NMR OF 130-154 IN COMPLEX WITH BCL2L1</scope>
    <scope>FUNCTION</scope>
    <scope>DOMAIN</scope>
    <scope>MUTAGENESIS OF TRP-133</scope>
    <scope>INTERACTION WITH BCL2L1</scope>
</reference>
<evidence type="ECO:0000250" key="1">
    <source>
        <dbReference type="UniProtKB" id="Q80ZG6"/>
    </source>
</evidence>
<evidence type="ECO:0000250" key="2">
    <source>
        <dbReference type="UniProtKB" id="Q99ML1"/>
    </source>
</evidence>
<evidence type="ECO:0000256" key="3">
    <source>
        <dbReference type="SAM" id="MobiDB-lite"/>
    </source>
</evidence>
<evidence type="ECO:0000269" key="4">
    <source>
    </source>
</evidence>
<evidence type="ECO:0000269" key="5">
    <source>
    </source>
</evidence>
<evidence type="ECO:0000269" key="6">
    <source>
    </source>
</evidence>
<evidence type="ECO:0000269" key="7">
    <source>
    </source>
</evidence>
<evidence type="ECO:0000269" key="8">
    <source>
    </source>
</evidence>
<evidence type="ECO:0000303" key="9">
    <source>
    </source>
</evidence>
<evidence type="ECO:0000305" key="10"/>
<evidence type="ECO:0007744" key="11">
    <source>
    </source>
</evidence>
<evidence type="ECO:0007829" key="12">
    <source>
        <dbReference type="PDB" id="5UUL"/>
    </source>
</evidence>
<evidence type="ECO:0007829" key="13">
    <source>
        <dbReference type="PDB" id="7P0S"/>
    </source>
</evidence>
<comment type="function">
    <text evidence="2 4 8">Essential mediator of p53/TP53-dependent and p53/TP53-independent apoptosis (PubMed:11463391, PubMed:23340338). Promotes partial unfolding of BCL2L1 and dissociation of BCL2L1 from p53/TP53, releasing the bound p53/TP53 to induce apoptosis (PubMed:23340338). Regulates ER stress-induced neuronal apoptosis (By similarity).</text>
</comment>
<comment type="subunit">
    <text evidence="1 2 4 8">Interacts with MCL1 and BCL2A1 (By similarity). Interacts (via BH3 domain) with BCL2 (PubMed:11463391). Interacts with BCL2L1/BCL-XL (PubMed:23340338). Interacts (via BH3 domain) with NOL3/ARC (via CARD domain); this interaction prevents BBC3 association with BCL2 and results in CASP8 activation (By similarity).</text>
</comment>
<comment type="interaction">
    <interactant intactId="EBI-519884">
        <id>Q9BXH1</id>
    </interactant>
    <interactant intactId="EBI-77694">
        <id>P10415</id>
        <label>BCL2</label>
    </interactant>
    <organismsDiffer>false</organismsDiffer>
    <experiments>6</experiments>
</comment>
<comment type="interaction">
    <interactant intactId="EBI-519884">
        <id>Q9BXH1</id>
    </interactant>
    <interactant intactId="EBI-287195">
        <id>Q07817-1</id>
        <label>BCL2L1</label>
    </interactant>
    <organismsDiffer>false</organismsDiffer>
    <experiments>9</experiments>
</comment>
<comment type="interaction">
    <interactant intactId="EBI-519884">
        <id>Q9BXH1</id>
    </interactant>
    <interactant intactId="EBI-707714">
        <id>Q92843</id>
        <label>BCL2L2</label>
    </interactant>
    <organismsDiffer>false</organismsDiffer>
    <experiments>3</experiments>
</comment>
<comment type="interaction">
    <interactant intactId="EBI-519884">
        <id>Q9BXH1</id>
    </interactant>
    <interactant intactId="EBI-297353">
        <id>P00533</id>
        <label>EGFR</label>
    </interactant>
    <organismsDiffer>false</organismsDiffer>
    <experiments>10</experiments>
</comment>
<comment type="interaction">
    <interactant intactId="EBI-519884">
        <id>Q9BXH1</id>
    </interactant>
    <interactant intactId="EBI-1003422">
        <id>Q07820</id>
        <label>MCL1</label>
    </interactant>
    <organismsDiffer>false</organismsDiffer>
    <experiments>5</experiments>
</comment>
<comment type="interaction">
    <interactant intactId="EBI-519884">
        <id>Q9BXH1</id>
    </interactant>
    <interactant intactId="EBI-707292">
        <id>P97287</id>
        <label>Mcl1</label>
    </interactant>
    <organismsDiffer>true</organismsDiffer>
    <experiments>5</experiments>
</comment>
<comment type="interaction">
    <interactant intactId="EBI-519896">
        <id>Q9BXH1-2</id>
    </interactant>
    <interactant intactId="EBI-1003422">
        <id>Q07820</id>
        <label>MCL1</label>
    </interactant>
    <organismsDiffer>false</organismsDiffer>
    <experiments>2</experiments>
</comment>
<comment type="subcellular location">
    <subcellularLocation>
        <location evidence="4 5 6">Mitochondrion</location>
    </subcellularLocation>
    <text>Localized to the mitochondria in order to induce cytochrome c release.</text>
</comment>
<comment type="alternative products">
    <event type="alternative splicing"/>
    <isoform>
        <id>Q9BXH1-1</id>
        <name>1</name>
        <name>PUMA alpha</name>
        <sequence type="displayed"/>
    </isoform>
    <isoform>
        <id>Q9BXH1-2</id>
        <name>2</name>
        <name>PUMA beta</name>
        <sequence type="described" ref="VSP_012238"/>
    </isoform>
    <isoform>
        <id>Q96PG8-1</id>
        <name>3</name>
        <name>PUMA delta</name>
        <sequence type="external"/>
    </isoform>
    <isoform>
        <id>Q96PG8-2</id>
        <name>4</name>
        <name>PUMA gamma</name>
        <sequence type="external"/>
    </isoform>
</comment>
<comment type="tissue specificity">
    <text evidence="4">Ubiquitously expressed.</text>
</comment>
<comment type="induction">
    <text evidence="5 6 7">Up-regulated by TP53 (PubMed:11463392, PubMed:11572983). Up-regulated by DNA damage, glucocorticoid treatment and growth factor deprivation (PubMed:11572983). Up-regulated by ER stress in a DDIT3/CHOP-dependent manner (PubMed:22761832).</text>
</comment>
<comment type="domain">
    <text evidence="2 8">The BH3 motif is intrinsically disordered in the absence of a binding partner but folds upon binding (PubMed:23340338). Folds when bound to BCL2L1 (PubMed:23340338). Also folds when bound to MCL1 (By similarity).</text>
</comment>
<comment type="similarity">
    <text evidence="10">Belongs to the Bcl-2 family.</text>
</comment>
<name>BBC3_HUMAN</name>
<accession>Q9BXH1</accession>
<accession>B9EGI3</accession>
<accession>O00171</accession>
<accession>Q96PG9</accession>
<proteinExistence type="evidence at protein level"/>
<gene>
    <name type="primary">BBC3</name>
    <name type="synonym">PUMA</name>
</gene>
<feature type="chain" id="PRO_0000143083" description="Bcl-2-binding component 3, isoforms 1/2">
    <location>
        <begin position="1"/>
        <end position="193"/>
    </location>
</feature>
<feature type="region of interest" description="Disordered" evidence="3">
    <location>
        <begin position="1"/>
        <end position="28"/>
    </location>
</feature>
<feature type="region of interest" description="Disordered" evidence="3">
    <location>
        <begin position="71"/>
        <end position="138"/>
    </location>
</feature>
<feature type="short sequence motif" description="BH3">
    <location>
        <begin position="137"/>
        <end position="151"/>
    </location>
</feature>
<feature type="compositionally biased region" description="Low complexity" evidence="3">
    <location>
        <begin position="71"/>
        <end position="82"/>
    </location>
</feature>
<feature type="modified residue" description="Phosphoserine" evidence="11">
    <location>
        <position position="10"/>
    </location>
</feature>
<feature type="splice variant" id="VSP_012238" description="In isoform 2." evidence="9">
    <original>MARARQEGSSPEPVEGLARDGPRPFPLGRLVPSAVSCGLCEPGLAAAPAAPTLLPAAYLCAPTAPPAVTAALGGSRWPGGPRSRPRGPRPDG</original>
    <variation>MKFGMGSAQACPCQVPRAASTTWVPCQICG</variation>
    <location>
        <begin position="1"/>
        <end position="92"/>
    </location>
</feature>
<feature type="mutagenesis site" description="Impairs p53/TP53-dependent apoptosis." evidence="8">
    <original>W</original>
    <variation>A</variation>
    <location>
        <position position="133"/>
    </location>
</feature>
<feature type="mutagenesis site" description="Abolishes BLC2-binding. Impairs growth inhibitory activity. No effect on mitochondrial subcellular location." evidence="5">
    <location>
        <begin position="141"/>
        <end position="143"/>
    </location>
</feature>
<feature type="helix" evidence="12">
    <location>
        <begin position="133"/>
        <end position="150"/>
    </location>
</feature>
<feature type="turn" evidence="13">
    <location>
        <begin position="151"/>
        <end position="154"/>
    </location>
</feature>
<sequence>MARARQEGSSPEPVEGLARDGPRPFPLGRLVPSAVSCGLCEPGLAAAPAAPTLLPAAYLCAPTAPPAVTAALGGSRWPGGPRSRPRGPRPDGPQPSLSLAEQHLESPVPSAPGALAGGPTQAAPGVRGEEEQWAREIGAQLRRMADDLNAQYERRRQEEQQRHRPSPWRVLYNLIMGLLPLPRGHRAPEMEPN</sequence>
<keyword id="KW-0002">3D-structure</keyword>
<keyword id="KW-0025">Alternative splicing</keyword>
<keyword id="KW-0053">Apoptosis</keyword>
<keyword id="KW-0496">Mitochondrion</keyword>
<keyword id="KW-0597">Phosphoprotein</keyword>
<keyword id="KW-1267">Proteomics identification</keyword>
<keyword id="KW-1185">Reference proteome</keyword>
<protein>
    <recommendedName>
        <fullName>Bcl-2-binding component 3, isoforms 1/2</fullName>
    </recommendedName>
    <alternativeName>
        <fullName>JFY-1</fullName>
    </alternativeName>
    <alternativeName>
        <fullName>p53 up-regulated modulator of apoptosis</fullName>
    </alternativeName>
</protein>